<accession>Q953J5</accession>
<proteinExistence type="inferred from homology"/>
<evidence type="ECO:0000250" key="1"/>
<evidence type="ECO:0000250" key="2">
    <source>
        <dbReference type="UniProtKB" id="P00157"/>
    </source>
</evidence>
<evidence type="ECO:0000255" key="3">
    <source>
        <dbReference type="PROSITE-ProRule" id="PRU00967"/>
    </source>
</evidence>
<evidence type="ECO:0000255" key="4">
    <source>
        <dbReference type="PROSITE-ProRule" id="PRU00968"/>
    </source>
</evidence>
<feature type="chain" id="PRO_0000061297" description="Cytochrome b">
    <location>
        <begin position="1"/>
        <end position="379"/>
    </location>
</feature>
<feature type="transmembrane region" description="Helical" evidence="2">
    <location>
        <begin position="33"/>
        <end position="53"/>
    </location>
</feature>
<feature type="transmembrane region" description="Helical" evidence="2">
    <location>
        <begin position="77"/>
        <end position="98"/>
    </location>
</feature>
<feature type="transmembrane region" description="Helical" evidence="2">
    <location>
        <begin position="113"/>
        <end position="133"/>
    </location>
</feature>
<feature type="transmembrane region" description="Helical" evidence="2">
    <location>
        <begin position="178"/>
        <end position="198"/>
    </location>
</feature>
<feature type="transmembrane region" description="Helical" evidence="2">
    <location>
        <begin position="226"/>
        <end position="246"/>
    </location>
</feature>
<feature type="transmembrane region" description="Helical" evidence="2">
    <location>
        <begin position="288"/>
        <end position="308"/>
    </location>
</feature>
<feature type="transmembrane region" description="Helical" evidence="2">
    <location>
        <begin position="320"/>
        <end position="340"/>
    </location>
</feature>
<feature type="transmembrane region" description="Helical" evidence="2">
    <location>
        <begin position="347"/>
        <end position="367"/>
    </location>
</feature>
<feature type="binding site" description="axial binding residue" evidence="2">
    <location>
        <position position="83"/>
    </location>
    <ligand>
        <name>heme b</name>
        <dbReference type="ChEBI" id="CHEBI:60344"/>
        <label>b562</label>
    </ligand>
    <ligandPart>
        <name>Fe</name>
        <dbReference type="ChEBI" id="CHEBI:18248"/>
    </ligandPart>
</feature>
<feature type="binding site" description="axial binding residue" evidence="2">
    <location>
        <position position="97"/>
    </location>
    <ligand>
        <name>heme b</name>
        <dbReference type="ChEBI" id="CHEBI:60344"/>
        <label>b566</label>
    </ligand>
    <ligandPart>
        <name>Fe</name>
        <dbReference type="ChEBI" id="CHEBI:18248"/>
    </ligandPart>
</feature>
<feature type="binding site" description="axial binding residue" evidence="2">
    <location>
        <position position="182"/>
    </location>
    <ligand>
        <name>heme b</name>
        <dbReference type="ChEBI" id="CHEBI:60344"/>
        <label>b562</label>
    </ligand>
    <ligandPart>
        <name>Fe</name>
        <dbReference type="ChEBI" id="CHEBI:18248"/>
    </ligandPart>
</feature>
<feature type="binding site" description="axial binding residue" evidence="2">
    <location>
        <position position="196"/>
    </location>
    <ligand>
        <name>heme b</name>
        <dbReference type="ChEBI" id="CHEBI:60344"/>
        <label>b566</label>
    </ligand>
    <ligandPart>
        <name>Fe</name>
        <dbReference type="ChEBI" id="CHEBI:18248"/>
    </ligandPart>
</feature>
<feature type="binding site" evidence="2">
    <location>
        <position position="201"/>
    </location>
    <ligand>
        <name>a ubiquinone</name>
        <dbReference type="ChEBI" id="CHEBI:16389"/>
    </ligand>
</feature>
<reference key="1">
    <citation type="journal article" date="2002" name="Gene">
        <title>Pika and vole mitochondrial genomes increase support for both rodent monophyly and glires.</title>
        <authorList>
            <person name="Lin Y.-H."/>
            <person name="Waddell P.J."/>
            <person name="Penny D."/>
        </authorList>
    </citation>
    <scope>NUCLEOTIDE SEQUENCE [GENOMIC DNA]</scope>
</reference>
<comment type="function">
    <text evidence="2">Component of the ubiquinol-cytochrome c reductase complex (complex III or cytochrome b-c1 complex) that is part of the mitochondrial respiratory chain. The b-c1 complex mediates electron transfer from ubiquinol to cytochrome c. Contributes to the generation of a proton gradient across the mitochondrial membrane that is then used for ATP synthesis.</text>
</comment>
<comment type="cofactor">
    <cofactor evidence="2">
        <name>heme b</name>
        <dbReference type="ChEBI" id="CHEBI:60344"/>
    </cofactor>
    <text evidence="2">Binds 2 heme b groups non-covalently.</text>
</comment>
<comment type="subunit">
    <text evidence="2">The cytochrome bc1 complex contains 11 subunits: 3 respiratory subunits (MT-CYB, CYC1 and UQCRFS1), 2 core proteins (UQCRC1 and UQCRC2) and 6 low-molecular weight proteins (UQCRH/QCR6, UQCRB/QCR7, UQCRQ/QCR8, UQCR10/QCR9, UQCR11/QCR10 and a cleavage product of UQCRFS1). This cytochrome bc1 complex then forms a dimer.</text>
</comment>
<comment type="subcellular location">
    <subcellularLocation>
        <location evidence="2">Mitochondrion inner membrane</location>
        <topology evidence="2">Multi-pass membrane protein</topology>
    </subcellularLocation>
</comment>
<comment type="miscellaneous">
    <text evidence="1">Heme 1 (or BL or b562) is low-potential and absorbs at about 562 nm, and heme 2 (or BH or b566) is high-potential and absorbs at about 566 nm.</text>
</comment>
<comment type="similarity">
    <text evidence="3 4">Belongs to the cytochrome b family.</text>
</comment>
<comment type="caution">
    <text evidence="2">The full-length protein contains only eight transmembrane helices, not nine as predicted by bioinformatics tools.</text>
</comment>
<keyword id="KW-0249">Electron transport</keyword>
<keyword id="KW-0349">Heme</keyword>
<keyword id="KW-0408">Iron</keyword>
<keyword id="KW-0472">Membrane</keyword>
<keyword id="KW-0479">Metal-binding</keyword>
<keyword id="KW-0496">Mitochondrion</keyword>
<keyword id="KW-0999">Mitochondrion inner membrane</keyword>
<keyword id="KW-0679">Respiratory chain</keyword>
<keyword id="KW-0812">Transmembrane</keyword>
<keyword id="KW-1133">Transmembrane helix</keyword>
<keyword id="KW-0813">Transport</keyword>
<keyword id="KW-0830">Ubiquinone</keyword>
<dbReference type="EMBL" id="AF348080">
    <property type="protein sequence ID" value="AAK71079.1"/>
    <property type="molecule type" value="Genomic_DNA"/>
</dbReference>
<dbReference type="RefSeq" id="NP_149460.1">
    <property type="nucleotide sequence ID" value="NC_003033.1"/>
</dbReference>
<dbReference type="SMR" id="Q953J5"/>
<dbReference type="GeneID" id="803520"/>
<dbReference type="CTD" id="4519"/>
<dbReference type="GO" id="GO:0005743">
    <property type="term" value="C:mitochondrial inner membrane"/>
    <property type="evidence" value="ECO:0007669"/>
    <property type="project" value="UniProtKB-SubCell"/>
</dbReference>
<dbReference type="GO" id="GO:0045275">
    <property type="term" value="C:respiratory chain complex III"/>
    <property type="evidence" value="ECO:0007669"/>
    <property type="project" value="InterPro"/>
</dbReference>
<dbReference type="GO" id="GO:0046872">
    <property type="term" value="F:metal ion binding"/>
    <property type="evidence" value="ECO:0007669"/>
    <property type="project" value="UniProtKB-KW"/>
</dbReference>
<dbReference type="GO" id="GO:0008121">
    <property type="term" value="F:ubiquinol-cytochrome-c reductase activity"/>
    <property type="evidence" value="ECO:0007669"/>
    <property type="project" value="InterPro"/>
</dbReference>
<dbReference type="GO" id="GO:0006122">
    <property type="term" value="P:mitochondrial electron transport, ubiquinol to cytochrome c"/>
    <property type="evidence" value="ECO:0007669"/>
    <property type="project" value="TreeGrafter"/>
</dbReference>
<dbReference type="CDD" id="cd00290">
    <property type="entry name" value="cytochrome_b_C"/>
    <property type="match status" value="1"/>
</dbReference>
<dbReference type="CDD" id="cd00284">
    <property type="entry name" value="Cytochrome_b_N"/>
    <property type="match status" value="1"/>
</dbReference>
<dbReference type="FunFam" id="1.20.810.10:FF:000002">
    <property type="entry name" value="Cytochrome b"/>
    <property type="match status" value="1"/>
</dbReference>
<dbReference type="Gene3D" id="1.20.810.10">
    <property type="entry name" value="Cytochrome Bc1 Complex, Chain C"/>
    <property type="match status" value="1"/>
</dbReference>
<dbReference type="InterPro" id="IPR005798">
    <property type="entry name" value="Cyt_b/b6_C"/>
</dbReference>
<dbReference type="InterPro" id="IPR036150">
    <property type="entry name" value="Cyt_b/b6_C_sf"/>
</dbReference>
<dbReference type="InterPro" id="IPR005797">
    <property type="entry name" value="Cyt_b/b6_N"/>
</dbReference>
<dbReference type="InterPro" id="IPR027387">
    <property type="entry name" value="Cytb/b6-like_sf"/>
</dbReference>
<dbReference type="InterPro" id="IPR030689">
    <property type="entry name" value="Cytochrome_b"/>
</dbReference>
<dbReference type="InterPro" id="IPR048260">
    <property type="entry name" value="Cytochrome_b_C_euk/bac"/>
</dbReference>
<dbReference type="InterPro" id="IPR048259">
    <property type="entry name" value="Cytochrome_b_N_euk/bac"/>
</dbReference>
<dbReference type="InterPro" id="IPR016174">
    <property type="entry name" value="Di-haem_cyt_TM"/>
</dbReference>
<dbReference type="PANTHER" id="PTHR19271">
    <property type="entry name" value="CYTOCHROME B"/>
    <property type="match status" value="1"/>
</dbReference>
<dbReference type="PANTHER" id="PTHR19271:SF16">
    <property type="entry name" value="CYTOCHROME B"/>
    <property type="match status" value="1"/>
</dbReference>
<dbReference type="Pfam" id="PF00032">
    <property type="entry name" value="Cytochrom_B_C"/>
    <property type="match status" value="1"/>
</dbReference>
<dbReference type="Pfam" id="PF00033">
    <property type="entry name" value="Cytochrome_B"/>
    <property type="match status" value="1"/>
</dbReference>
<dbReference type="PIRSF" id="PIRSF038885">
    <property type="entry name" value="COB"/>
    <property type="match status" value="1"/>
</dbReference>
<dbReference type="SUPFAM" id="SSF81648">
    <property type="entry name" value="a domain/subunit of cytochrome bc1 complex (Ubiquinol-cytochrome c reductase)"/>
    <property type="match status" value="1"/>
</dbReference>
<dbReference type="SUPFAM" id="SSF81342">
    <property type="entry name" value="Transmembrane di-heme cytochromes"/>
    <property type="match status" value="1"/>
</dbReference>
<dbReference type="PROSITE" id="PS51003">
    <property type="entry name" value="CYTB_CTER"/>
    <property type="match status" value="1"/>
</dbReference>
<dbReference type="PROSITE" id="PS51002">
    <property type="entry name" value="CYTB_NTER"/>
    <property type="match status" value="1"/>
</dbReference>
<gene>
    <name type="primary">MT-CYB</name>
    <name type="synonym">COB</name>
    <name type="synonym">CYTB</name>
    <name type="synonym">MTCYB</name>
</gene>
<organism>
    <name type="scientific">Ochotona collaris</name>
    <name type="common">Collared pika</name>
    <dbReference type="NCBI Taxonomy" id="134600"/>
    <lineage>
        <taxon>Eukaryota</taxon>
        <taxon>Metazoa</taxon>
        <taxon>Chordata</taxon>
        <taxon>Craniata</taxon>
        <taxon>Vertebrata</taxon>
        <taxon>Euteleostomi</taxon>
        <taxon>Mammalia</taxon>
        <taxon>Eutheria</taxon>
        <taxon>Euarchontoglires</taxon>
        <taxon>Glires</taxon>
        <taxon>Lagomorpha</taxon>
        <taxon>Ochotonidae</taxon>
        <taxon>Ochotona</taxon>
    </lineage>
</organism>
<name>CYB_OCHCO</name>
<geneLocation type="mitochondrion"/>
<sequence>MTNMRKNHPLMKIINHSFIDLPTPSNISTWWNFGSLLGLCLGIQIITGLFLAMHYTSDTLTAFSSVTHICRDVNYGWIIRYLHANGASMFFICLFLHVGRGIYYGSYTYSETWNIGILLLFAVMATAFMGYVLPWGQMSFWGATVITNLLSAIPYIGTDLVQWIWGGFSVDKATLTRFFAFHFILPFIIAALVMVHLLFLHETGSNNPTGIIPDADKIPFHPYYTIKDALGFLLLISLLLTLVLFSPDLLGDPDNYTPANPLNTPPHIKPEWYFLFAYAILRSIPNKLGGVLALILSIAILAIMPLLHTSKQRSMMFRPISQTLFWILVADLLTLTWIGGQPVEHPFTIIGQLASFLYFFLILVLMPACSLIENKLLKW</sequence>
<protein>
    <recommendedName>
        <fullName>Cytochrome b</fullName>
    </recommendedName>
    <alternativeName>
        <fullName>Complex III subunit 3</fullName>
    </alternativeName>
    <alternativeName>
        <fullName>Complex III subunit III</fullName>
    </alternativeName>
    <alternativeName>
        <fullName>Cytochrome b-c1 complex subunit 3</fullName>
    </alternativeName>
    <alternativeName>
        <fullName>Ubiquinol-cytochrome-c reductase complex cytochrome b subunit</fullName>
    </alternativeName>
</protein>